<gene>
    <name type="primary">med7</name>
    <name type="synonym">crsp9</name>
    <name type="ORF">TGas067f23.1</name>
</gene>
<reference key="1">
    <citation type="submission" date="2006-10" db="EMBL/GenBank/DDBJ databases">
        <authorList>
            <consortium name="Sanger Xenopus tropicalis EST/cDNA project"/>
        </authorList>
    </citation>
    <scope>NUCLEOTIDE SEQUENCE [LARGE SCALE MRNA]</scope>
    <source>
        <tissue>Gastrula</tissue>
    </source>
</reference>
<reference key="2">
    <citation type="submission" date="2005-03" db="EMBL/GenBank/DDBJ databases">
        <authorList>
            <consortium name="NIH - Xenopus Gene Collection (XGC) project"/>
        </authorList>
    </citation>
    <scope>NUCLEOTIDE SEQUENCE [LARGE SCALE MRNA]</scope>
    <source>
        <tissue>Embryo</tissue>
    </source>
</reference>
<protein>
    <recommendedName>
        <fullName>Mediator of RNA polymerase II transcription subunit 7</fullName>
    </recommendedName>
    <alternativeName>
        <fullName>Cofactor required for Sp1 transcriptional activation subunit 9</fullName>
        <shortName>CRSP complex subunit 9</shortName>
    </alternativeName>
    <alternativeName>
        <fullName>Mediator complex subunit 7</fullName>
    </alternativeName>
</protein>
<keyword id="KW-0010">Activator</keyword>
<keyword id="KW-0539">Nucleus</keyword>
<keyword id="KW-1185">Reference proteome</keyword>
<keyword id="KW-0804">Transcription</keyword>
<keyword id="KW-0805">Transcription regulation</keyword>
<proteinExistence type="evidence at transcript level"/>
<evidence type="ECO:0000250" key="1"/>
<evidence type="ECO:0000305" key="2"/>
<name>MED7_XENTR</name>
<accession>Q5BJ48</accession>
<organism>
    <name type="scientific">Xenopus tropicalis</name>
    <name type="common">Western clawed frog</name>
    <name type="synonym">Silurana tropicalis</name>
    <dbReference type="NCBI Taxonomy" id="8364"/>
    <lineage>
        <taxon>Eukaryota</taxon>
        <taxon>Metazoa</taxon>
        <taxon>Chordata</taxon>
        <taxon>Craniata</taxon>
        <taxon>Vertebrata</taxon>
        <taxon>Euteleostomi</taxon>
        <taxon>Amphibia</taxon>
        <taxon>Batrachia</taxon>
        <taxon>Anura</taxon>
        <taxon>Pipoidea</taxon>
        <taxon>Pipidae</taxon>
        <taxon>Xenopodinae</taxon>
        <taxon>Xenopus</taxon>
        <taxon>Silurana</taxon>
    </lineage>
</organism>
<dbReference type="EMBL" id="CR848598">
    <property type="protein sequence ID" value="CAJ83895.1"/>
    <property type="molecule type" value="mRNA"/>
</dbReference>
<dbReference type="EMBL" id="BC091623">
    <property type="protein sequence ID" value="AAH91623.1"/>
    <property type="molecule type" value="mRNA"/>
</dbReference>
<dbReference type="RefSeq" id="NP_001016879.1">
    <property type="nucleotide sequence ID" value="NM_001016879.2"/>
</dbReference>
<dbReference type="RefSeq" id="XP_012814505.1">
    <property type="nucleotide sequence ID" value="XM_012959051.3"/>
</dbReference>
<dbReference type="SMR" id="Q5BJ48"/>
<dbReference type="FunCoup" id="Q5BJ48">
    <property type="interactions" value="2332"/>
</dbReference>
<dbReference type="STRING" id="8364.ENSXETP00000008174"/>
<dbReference type="PaxDb" id="8364-ENSXETP00000003150"/>
<dbReference type="GeneID" id="549633"/>
<dbReference type="KEGG" id="xtr:549633"/>
<dbReference type="AGR" id="Xenbase:XB-GENE-922711"/>
<dbReference type="CTD" id="9443"/>
<dbReference type="Xenbase" id="XB-GENE-922711">
    <property type="gene designation" value="med7"/>
</dbReference>
<dbReference type="eggNOG" id="KOG0570">
    <property type="taxonomic scope" value="Eukaryota"/>
</dbReference>
<dbReference type="HOGENOM" id="CLU_065214_2_0_1"/>
<dbReference type="InParanoid" id="Q5BJ48"/>
<dbReference type="OMA" id="IHDSYSM"/>
<dbReference type="OrthoDB" id="10253553at2759"/>
<dbReference type="PhylomeDB" id="Q5BJ48"/>
<dbReference type="TreeFam" id="TF314411"/>
<dbReference type="Proteomes" id="UP000008143">
    <property type="component" value="Chromosome 3"/>
</dbReference>
<dbReference type="Bgee" id="ENSXETG00000001505">
    <property type="expression patterns" value="Expressed in egg cell and 13 other cell types or tissues"/>
</dbReference>
<dbReference type="GO" id="GO:0016592">
    <property type="term" value="C:mediator complex"/>
    <property type="evidence" value="ECO:0007669"/>
    <property type="project" value="InterPro"/>
</dbReference>
<dbReference type="GO" id="GO:0003712">
    <property type="term" value="F:transcription coregulator activity"/>
    <property type="evidence" value="ECO:0007669"/>
    <property type="project" value="InterPro"/>
</dbReference>
<dbReference type="GO" id="GO:0006357">
    <property type="term" value="P:regulation of transcription by RNA polymerase II"/>
    <property type="evidence" value="ECO:0007669"/>
    <property type="project" value="InterPro"/>
</dbReference>
<dbReference type="Gene3D" id="6.10.140.200">
    <property type="match status" value="1"/>
</dbReference>
<dbReference type="InterPro" id="IPR051669">
    <property type="entry name" value="Immune_Mod/Transcr_Coactivator"/>
</dbReference>
<dbReference type="InterPro" id="IPR037212">
    <property type="entry name" value="Med7/Med21-like"/>
</dbReference>
<dbReference type="InterPro" id="IPR009244">
    <property type="entry name" value="Mediatior_Med7"/>
</dbReference>
<dbReference type="InterPro" id="IPR044888">
    <property type="entry name" value="Mediatior_Med7_sf"/>
</dbReference>
<dbReference type="PANTHER" id="PTHR15498:SF72">
    <property type="entry name" value="MEDIATOR OF RNA POLYMERASE II TRANSCRIPTION SUBUNIT 7"/>
    <property type="match status" value="1"/>
</dbReference>
<dbReference type="PANTHER" id="PTHR15498">
    <property type="entry name" value="T-CELL IMMUNOGLOBULIN AND MUCIN DOMAIN CONTAINING TIM"/>
    <property type="match status" value="1"/>
</dbReference>
<dbReference type="Pfam" id="PF05983">
    <property type="entry name" value="Med7"/>
    <property type="match status" value="1"/>
</dbReference>
<dbReference type="SUPFAM" id="SSF140718">
    <property type="entry name" value="Mediator hinge subcomplex-like"/>
    <property type="match status" value="1"/>
</dbReference>
<sequence>MGEPQQVSALPIPPMQYIKEYTDENIRKGLAPKPPLPIKDSYMMFGNQFQCDDLIIRPLETQGIERLHPMQFDHKKELRKLLMSILVNFLDMLDILIRSPGSIRREEKLEDLKLLFVHMHHLINEYRPHQARETLRVMMEVQKRQRLETAERFQKHLERVVEMIQNCLASLPNDLPLSDGAVSVKTEPMDVREPCTDHHAGPQEAAAASLKETTIDKDAAMCVIIDEMT</sequence>
<comment type="function">
    <text evidence="1">Component of the Mediator complex, a coactivator involved in the regulated transcription of nearly all RNA polymerase II-dependent genes. Mediator functions as a bridge to convey information from gene-specific regulatory proteins to the basal RNA polymerase II transcription machinery. Mediator is recruited to promoters by direct interactions with regulatory proteins and serves as a scaffold for the assembly of a functional preinitiation complex with RNA polymerase II and the general transcription factors (By similarity).</text>
</comment>
<comment type="subunit">
    <text evidence="1">Component of the Mediator complex.</text>
</comment>
<comment type="subcellular location">
    <subcellularLocation>
        <location evidence="1">Nucleus</location>
    </subcellularLocation>
</comment>
<comment type="similarity">
    <text evidence="2">Belongs to the Mediator complex subunit 7 family.</text>
</comment>
<feature type="chain" id="PRO_0000303184" description="Mediator of RNA polymerase II transcription subunit 7">
    <location>
        <begin position="1"/>
        <end position="229"/>
    </location>
</feature>